<comment type="function">
    <text evidence="1">Involved in FAD and FMN biosynthesis.</text>
</comment>
<comment type="function">
    <text evidence="1">Catalyzes the 2-thiolation of uridine at the wobble position (U34) of tRNA, leading to the formation of s(2)U34.</text>
</comment>
<comment type="catalytic activity">
    <reaction>
        <text>riboflavin + ATP = FMN + ADP + H(+)</text>
        <dbReference type="Rhea" id="RHEA:14357"/>
        <dbReference type="ChEBI" id="CHEBI:15378"/>
        <dbReference type="ChEBI" id="CHEBI:30616"/>
        <dbReference type="ChEBI" id="CHEBI:57986"/>
        <dbReference type="ChEBI" id="CHEBI:58210"/>
        <dbReference type="ChEBI" id="CHEBI:456216"/>
        <dbReference type="EC" id="2.7.1.26"/>
    </reaction>
</comment>
<comment type="catalytic activity">
    <reaction>
        <text>FMN + ATP + H(+) = FAD + diphosphate</text>
        <dbReference type="Rhea" id="RHEA:17237"/>
        <dbReference type="ChEBI" id="CHEBI:15378"/>
        <dbReference type="ChEBI" id="CHEBI:30616"/>
        <dbReference type="ChEBI" id="CHEBI:33019"/>
        <dbReference type="ChEBI" id="CHEBI:57692"/>
        <dbReference type="ChEBI" id="CHEBI:58210"/>
        <dbReference type="EC" id="2.7.7.2"/>
    </reaction>
</comment>
<comment type="catalytic activity">
    <reaction>
        <text>S-sulfanyl-L-cysteinyl-[protein] + uridine(34) in tRNA + AH2 + ATP = 2-thiouridine(34) in tRNA + L-cysteinyl-[protein] + A + AMP + diphosphate + H(+)</text>
        <dbReference type="Rhea" id="RHEA:47032"/>
        <dbReference type="Rhea" id="RHEA-COMP:10131"/>
        <dbReference type="Rhea" id="RHEA-COMP:11726"/>
        <dbReference type="Rhea" id="RHEA-COMP:11727"/>
        <dbReference type="Rhea" id="RHEA-COMP:11728"/>
        <dbReference type="ChEBI" id="CHEBI:13193"/>
        <dbReference type="ChEBI" id="CHEBI:15378"/>
        <dbReference type="ChEBI" id="CHEBI:17499"/>
        <dbReference type="ChEBI" id="CHEBI:29950"/>
        <dbReference type="ChEBI" id="CHEBI:30616"/>
        <dbReference type="ChEBI" id="CHEBI:33019"/>
        <dbReference type="ChEBI" id="CHEBI:61963"/>
        <dbReference type="ChEBI" id="CHEBI:65315"/>
        <dbReference type="ChEBI" id="CHEBI:87170"/>
        <dbReference type="ChEBI" id="CHEBI:456215"/>
        <dbReference type="EC" id="2.8.1.13"/>
    </reaction>
</comment>
<comment type="pathway">
    <text>Cofactor biosynthesis; FAD biosynthesis; FAD from FMN: step 1/1.</text>
</comment>
<comment type="pathway">
    <text>Cofactor biosynthesis; FMN biosynthesis; FMN from riboflavin (ATP route): step 1/1.</text>
</comment>
<comment type="subcellular location">
    <subcellularLocation>
        <location evidence="1">Cytoplasm</location>
    </subcellularLocation>
</comment>
<comment type="similarity">
    <text evidence="2">In the N-terminal section; belongs to the RibF family.</text>
</comment>
<comment type="similarity">
    <text evidence="2">In the C-terminal section; belongs to the MnmA/TRMU family.</text>
</comment>
<dbReference type="EC" id="2.7.7.2"/>
<dbReference type="EC" id="2.7.1.26"/>
<dbReference type="EC" id="2.8.1.13"/>
<dbReference type="EMBL" id="AE015450">
    <property type="protein sequence ID" value="AAP56470.1"/>
    <property type="molecule type" value="Genomic_DNA"/>
</dbReference>
<dbReference type="SMR" id="Q7NBZ0"/>
<dbReference type="MoonProt" id="Q7NBZ0"/>
<dbReference type="KEGG" id="mga:MGA_0832"/>
<dbReference type="PATRIC" id="fig|233150.7.peg.134"/>
<dbReference type="HOGENOM" id="CLU_417276_0_0_14"/>
<dbReference type="OrthoDB" id="9800696at2"/>
<dbReference type="UniPathway" id="UPA00276">
    <property type="reaction ID" value="UER00406"/>
</dbReference>
<dbReference type="UniPathway" id="UPA00277">
    <property type="reaction ID" value="UER00407"/>
</dbReference>
<dbReference type="Proteomes" id="UP000001418">
    <property type="component" value="Chromosome"/>
</dbReference>
<dbReference type="GO" id="GO:0005737">
    <property type="term" value="C:cytoplasm"/>
    <property type="evidence" value="ECO:0007669"/>
    <property type="project" value="UniProtKB-SubCell"/>
</dbReference>
<dbReference type="GO" id="GO:0005524">
    <property type="term" value="F:ATP binding"/>
    <property type="evidence" value="ECO:0007669"/>
    <property type="project" value="UniProtKB-KW"/>
</dbReference>
<dbReference type="GO" id="GO:0003919">
    <property type="term" value="F:FMN adenylyltransferase activity"/>
    <property type="evidence" value="ECO:0007669"/>
    <property type="project" value="UniProtKB-EC"/>
</dbReference>
<dbReference type="GO" id="GO:0008531">
    <property type="term" value="F:riboflavin kinase activity"/>
    <property type="evidence" value="ECO:0007669"/>
    <property type="project" value="UniProtKB-EC"/>
</dbReference>
<dbReference type="GO" id="GO:0000049">
    <property type="term" value="F:tRNA binding"/>
    <property type="evidence" value="ECO:0007669"/>
    <property type="project" value="UniProtKB-KW"/>
</dbReference>
<dbReference type="GO" id="GO:0103016">
    <property type="term" value="F:tRNA-uridine 2-sulfurtransferase activity"/>
    <property type="evidence" value="ECO:0007669"/>
    <property type="project" value="UniProtKB-EC"/>
</dbReference>
<dbReference type="GO" id="GO:0006747">
    <property type="term" value="P:FAD biosynthetic process"/>
    <property type="evidence" value="ECO:0007669"/>
    <property type="project" value="UniProtKB-UniPathway"/>
</dbReference>
<dbReference type="GO" id="GO:0009398">
    <property type="term" value="P:FMN biosynthetic process"/>
    <property type="evidence" value="ECO:0007669"/>
    <property type="project" value="UniProtKB-UniPathway"/>
</dbReference>
<dbReference type="GO" id="GO:0009231">
    <property type="term" value="P:riboflavin biosynthetic process"/>
    <property type="evidence" value="ECO:0007669"/>
    <property type="project" value="InterPro"/>
</dbReference>
<dbReference type="GO" id="GO:0002143">
    <property type="term" value="P:tRNA wobble position uridine thiolation"/>
    <property type="evidence" value="ECO:0007669"/>
    <property type="project" value="TreeGrafter"/>
</dbReference>
<dbReference type="CDD" id="cd02064">
    <property type="entry name" value="FAD_synthetase_N"/>
    <property type="match status" value="1"/>
</dbReference>
<dbReference type="CDD" id="cd01998">
    <property type="entry name" value="MnmA_TRMU-like"/>
    <property type="match status" value="1"/>
</dbReference>
<dbReference type="FunFam" id="2.30.30.280:FF:000001">
    <property type="entry name" value="tRNA-specific 2-thiouridylase MnmA"/>
    <property type="match status" value="1"/>
</dbReference>
<dbReference type="FunFam" id="3.40.50.620:FF:000115">
    <property type="entry name" value="tRNA-specific 2-thiouridylase MnmA"/>
    <property type="match status" value="1"/>
</dbReference>
<dbReference type="Gene3D" id="2.30.30.280">
    <property type="entry name" value="Adenine nucleotide alpha hydrolases-like domains"/>
    <property type="match status" value="1"/>
</dbReference>
<dbReference type="Gene3D" id="3.40.50.620">
    <property type="entry name" value="HUPs"/>
    <property type="match status" value="2"/>
</dbReference>
<dbReference type="Gene3D" id="2.40.30.30">
    <property type="entry name" value="Riboflavin kinase-like"/>
    <property type="match status" value="1"/>
</dbReference>
<dbReference type="Gene3D" id="2.40.30.10">
    <property type="entry name" value="Translation factors"/>
    <property type="match status" value="1"/>
</dbReference>
<dbReference type="HAMAP" id="MF_00144">
    <property type="entry name" value="tRNA_thiouridyl_MnmA"/>
    <property type="match status" value="1"/>
</dbReference>
<dbReference type="InterPro" id="IPR015864">
    <property type="entry name" value="FAD_synthase"/>
</dbReference>
<dbReference type="InterPro" id="IPR004506">
    <property type="entry name" value="MnmA-like"/>
</dbReference>
<dbReference type="InterPro" id="IPR046885">
    <property type="entry name" value="MnmA-like_C"/>
</dbReference>
<dbReference type="InterPro" id="IPR046884">
    <property type="entry name" value="MnmA-like_central"/>
</dbReference>
<dbReference type="InterPro" id="IPR023382">
    <property type="entry name" value="MnmA-like_central_sf"/>
</dbReference>
<dbReference type="InterPro" id="IPR002606">
    <property type="entry name" value="Riboflavin_kinase_bac"/>
</dbReference>
<dbReference type="InterPro" id="IPR015865">
    <property type="entry name" value="Riboflavin_kinase_bac/euk"/>
</dbReference>
<dbReference type="InterPro" id="IPR023465">
    <property type="entry name" value="Riboflavin_kinase_dom_sf"/>
</dbReference>
<dbReference type="InterPro" id="IPR014729">
    <property type="entry name" value="Rossmann-like_a/b/a_fold"/>
</dbReference>
<dbReference type="NCBIfam" id="NF001138">
    <property type="entry name" value="PRK00143.1"/>
    <property type="match status" value="1"/>
</dbReference>
<dbReference type="NCBIfam" id="TIGR00083">
    <property type="entry name" value="ribF"/>
    <property type="match status" value="1"/>
</dbReference>
<dbReference type="NCBIfam" id="TIGR00420">
    <property type="entry name" value="trmU"/>
    <property type="match status" value="1"/>
</dbReference>
<dbReference type="PANTHER" id="PTHR11933:SF5">
    <property type="entry name" value="MITOCHONDRIAL TRNA-SPECIFIC 2-THIOURIDYLASE 1"/>
    <property type="match status" value="1"/>
</dbReference>
<dbReference type="PANTHER" id="PTHR11933">
    <property type="entry name" value="TRNA 5-METHYLAMINOMETHYL-2-THIOURIDYLATE -METHYLTRANSFERASE"/>
    <property type="match status" value="1"/>
</dbReference>
<dbReference type="Pfam" id="PF06574">
    <property type="entry name" value="FAD_syn"/>
    <property type="match status" value="1"/>
</dbReference>
<dbReference type="Pfam" id="PF01687">
    <property type="entry name" value="Flavokinase"/>
    <property type="match status" value="1"/>
</dbReference>
<dbReference type="Pfam" id="PF03054">
    <property type="entry name" value="tRNA_Me_trans"/>
    <property type="match status" value="1"/>
</dbReference>
<dbReference type="Pfam" id="PF20258">
    <property type="entry name" value="tRNA_Me_trans_C"/>
    <property type="match status" value="1"/>
</dbReference>
<dbReference type="Pfam" id="PF20259">
    <property type="entry name" value="tRNA_Me_trans_M"/>
    <property type="match status" value="1"/>
</dbReference>
<dbReference type="SMART" id="SM00904">
    <property type="entry name" value="Flavokinase"/>
    <property type="match status" value="1"/>
</dbReference>
<dbReference type="SUPFAM" id="SSF52402">
    <property type="entry name" value="Adenine nucleotide alpha hydrolases-like"/>
    <property type="match status" value="1"/>
</dbReference>
<dbReference type="SUPFAM" id="SSF52374">
    <property type="entry name" value="Nucleotidylyl transferase"/>
    <property type="match status" value="1"/>
</dbReference>
<dbReference type="SUPFAM" id="SSF82114">
    <property type="entry name" value="Riboflavin kinase-like"/>
    <property type="match status" value="1"/>
</dbReference>
<gene>
    <name type="primary">ribF/mnmA</name>
    <name type="ordered locus">MYCGA1200</name>
    <name type="ORF">MGA_0832</name>
</gene>
<feature type="chain" id="PRO_0000349871" description="Trifunctional protein RibF/MnmA">
    <location>
        <begin position="1"/>
        <end position="657"/>
    </location>
</feature>
<feature type="region of interest" description="FMN adenylyltransferase">
    <location>
        <begin position="1"/>
        <end position="141"/>
    </location>
</feature>
<feature type="region of interest" description="Riboflavin kinase">
    <location>
        <begin position="158"/>
        <end position="282"/>
    </location>
</feature>
<feature type="region of interest" description="tRNA-specific 2-thiouridylase MnmA">
    <location>
        <begin position="283"/>
        <end position="657"/>
    </location>
</feature>
<feature type="region of interest" description="Interaction with target base in tRNA" evidence="1">
    <location>
        <begin position="389"/>
        <end position="391"/>
    </location>
</feature>
<feature type="region of interest" description="Interaction with tRNA" evidence="1">
    <location>
        <begin position="442"/>
        <end position="444"/>
    </location>
</feature>
<feature type="active site" description="Nucleophile" evidence="1">
    <location>
        <position position="394"/>
    </location>
</feature>
<feature type="active site" description="Cysteine persulfide intermediate" evidence="1">
    <location>
        <position position="492"/>
    </location>
</feature>
<feature type="binding site" evidence="1">
    <location>
        <begin position="292"/>
        <end position="299"/>
    </location>
    <ligand>
        <name>ATP</name>
        <dbReference type="ChEBI" id="CHEBI:30616"/>
    </ligand>
</feature>
<feature type="binding site" evidence="1">
    <location>
        <position position="318"/>
    </location>
    <ligand>
        <name>ATP</name>
        <dbReference type="ChEBI" id="CHEBI:30616"/>
    </ligand>
</feature>
<feature type="binding site" evidence="1">
    <location>
        <position position="420"/>
    </location>
    <ligand>
        <name>ATP</name>
        <dbReference type="ChEBI" id="CHEBI:30616"/>
    </ligand>
</feature>
<feature type="site" description="Interaction with tRNA" evidence="1">
    <location>
        <position position="421"/>
    </location>
</feature>
<feature type="site" description="Interaction with tRNA" evidence="1">
    <location>
        <position position="635"/>
    </location>
</feature>
<feature type="disulfide bond" description="Alternate" evidence="1">
    <location>
        <begin position="394"/>
        <end position="492"/>
    </location>
</feature>
<name>MNMA_MYCGA</name>
<organism>
    <name type="scientific">Mycoplasmoides gallisepticum (strain R(low / passage 15 / clone 2))</name>
    <name type="common">Mycoplasma gallisepticum</name>
    <dbReference type="NCBI Taxonomy" id="710127"/>
    <lineage>
        <taxon>Bacteria</taxon>
        <taxon>Bacillati</taxon>
        <taxon>Mycoplasmatota</taxon>
        <taxon>Mycoplasmoidales</taxon>
        <taxon>Mycoplasmoidaceae</taxon>
        <taxon>Mycoplasmoides</taxon>
    </lineage>
</organism>
<reference key="1">
    <citation type="journal article" date="2003" name="Microbiology">
        <title>The complete genome sequence of the avian pathogen Mycoplasma gallisepticum strain R(low).</title>
        <authorList>
            <person name="Papazisi L."/>
            <person name="Gorton T.S."/>
            <person name="Kutish G."/>
            <person name="Markham P.F."/>
            <person name="Browning G.F."/>
            <person name="Nguyen D.K."/>
            <person name="Swartzell S."/>
            <person name="Madan A."/>
            <person name="Mahairas G."/>
            <person name="Geary S.J."/>
        </authorList>
    </citation>
    <scope>NUCLEOTIDE SEQUENCE [LARGE SCALE GENOMIC DNA]</scope>
    <source>
        <strain>R(low / passage 15 / clone 2)</strain>
    </source>
</reference>
<proteinExistence type="inferred from homology"/>
<accession>Q7NBZ0</accession>
<sequence>MLSIINLTSKTIKEVNKGVDLVIGFFDGIHKGHAKLFKQSDRFNLLTFDHIPKKQRLLYPKVDEIEQLSALSGLEQLLVYDLLNNNLSAQEFIDNYIKLIQPKRIIVGSDFKFGSDQVDYSLFAKNGYEVVVVKKDHCSTSEIKKLIINCDLDQANKLLLTPFYLKGTVIKNAQRGRTIGFVTANIILDNQLIELTEGSYVCKVIVDNKTYQGICFIGKPKTFDEKQRQCEAHIFDFDQDIYGKKIKVELYQFIRPTVKFNSINELKEAIENDKKAALSFFHKQEKPKVVVALSGGVDSAVCAYLLQQQGYDVVAAFMQNWDKDLNFELLSDHADDQIQGCDAKQDYEDTQKLCEQLKIKLYHFNFVEQYWNDVFLKVLEDYKKGLTPNPDVLCNQFGKFGWFINALRKQFGDDIKIAFGHYAKLITKDDEVFLVHTKDHNKDQTYFLTMLKKEQLKNIIFPLSELDKPTVREIAKQANLYVANKKDSTGICFIGERNFKQFLSNYLAIKKGPIILIDENKKIGEHDGLYFYTIGQSRRLHVGGTKEKIFVCDKDYNNNTLYVCYESSKDQYLSSVSCELEKFNWLIDTKDQLFNKKLWIRFRHRQKLQECEIVSYHDDKVIVKYTKQIGVTPGQYGVIYDQNLWVVGGGKITKIIK</sequence>
<evidence type="ECO:0000250" key="1"/>
<evidence type="ECO:0000305" key="2"/>
<protein>
    <recommendedName>
        <fullName>Trifunctional protein RibF/MnmA</fullName>
    </recommendedName>
    <domain>
        <recommendedName>
            <fullName>FMN adenylyltransferase</fullName>
            <ecNumber>2.7.7.2</ecNumber>
        </recommendedName>
        <alternativeName>
            <fullName>FAD pyrophosphorylase</fullName>
        </alternativeName>
        <alternativeName>
            <fullName>FAD synthase</fullName>
        </alternativeName>
    </domain>
    <domain>
        <recommendedName>
            <fullName>Riboflavin kinase</fullName>
            <ecNumber>2.7.1.26</ecNumber>
        </recommendedName>
        <alternativeName>
            <fullName>Flavokinase</fullName>
        </alternativeName>
    </domain>
    <domain>
        <recommendedName>
            <fullName>tRNA-specific 2-thiouridylase MnmA</fullName>
            <ecNumber>2.8.1.13</ecNumber>
        </recommendedName>
    </domain>
</protein>
<keyword id="KW-0067">ATP-binding</keyword>
<keyword id="KW-0963">Cytoplasm</keyword>
<keyword id="KW-1015">Disulfide bond</keyword>
<keyword id="KW-0274">FAD</keyword>
<keyword id="KW-0285">Flavoprotein</keyword>
<keyword id="KW-0288">FMN</keyword>
<keyword id="KW-0418">Kinase</keyword>
<keyword id="KW-0511">Multifunctional enzyme</keyword>
<keyword id="KW-0547">Nucleotide-binding</keyword>
<keyword id="KW-0548">Nucleotidyltransferase</keyword>
<keyword id="KW-1185">Reference proteome</keyword>
<keyword id="KW-0694">RNA-binding</keyword>
<keyword id="KW-0808">Transferase</keyword>
<keyword id="KW-0819">tRNA processing</keyword>
<keyword id="KW-0820">tRNA-binding</keyword>